<accession>Q4G344</accession>
<keyword id="KW-0150">Chloroplast</keyword>
<keyword id="KW-0934">Plastid</keyword>
<keyword id="KW-0687">Ribonucleoprotein</keyword>
<keyword id="KW-0689">Ribosomal protein</keyword>
<keyword id="KW-0694">RNA-binding</keyword>
<keyword id="KW-0699">rRNA-binding</keyword>
<reference key="1">
    <citation type="journal article" date="2005" name="DNA Res.">
        <title>The complete plastid genome sequence of the haptophyte Emiliania huxleyi: a comparison to other plastid genomes.</title>
        <authorList>
            <person name="Sanchez-Puerta M.V."/>
            <person name="Bachvaroff T.R."/>
            <person name="Delwiche C.F."/>
        </authorList>
    </citation>
    <scope>NUCLEOTIDE SEQUENCE [LARGE SCALE GENOMIC DNA]</scope>
    <source>
        <strain>CCMP373 / CSIRO-CS-57 / BT6</strain>
    </source>
</reference>
<geneLocation type="chloroplast"/>
<sequence length="125" mass="13915">MPTIQQLVRFERQTSEKKTKSPALKSCPQRRGVCTRVYTTTPKKPNSALRKVARVRLTSGFEVTAYIPGIGHNIQEHSVVLIRGGRVKDLPGCRYHVVRGSLDASGVKDRKQGRSKYGGKRPKGD</sequence>
<dbReference type="EMBL" id="AY741371">
    <property type="protein sequence ID" value="AAX13922.1"/>
    <property type="molecule type" value="Genomic_DNA"/>
</dbReference>
<dbReference type="RefSeq" id="YP_277423.1">
    <property type="nucleotide sequence ID" value="NC_007288.1"/>
</dbReference>
<dbReference type="SMR" id="Q4G344"/>
<dbReference type="STRING" id="2903.Q4G344"/>
<dbReference type="GeneID" id="3562526"/>
<dbReference type="GO" id="GO:0009507">
    <property type="term" value="C:chloroplast"/>
    <property type="evidence" value="ECO:0007669"/>
    <property type="project" value="UniProtKB-SubCell"/>
</dbReference>
<dbReference type="GO" id="GO:0015935">
    <property type="term" value="C:small ribosomal subunit"/>
    <property type="evidence" value="ECO:0007669"/>
    <property type="project" value="InterPro"/>
</dbReference>
<dbReference type="GO" id="GO:0019843">
    <property type="term" value="F:rRNA binding"/>
    <property type="evidence" value="ECO:0007669"/>
    <property type="project" value="UniProtKB-UniRule"/>
</dbReference>
<dbReference type="GO" id="GO:0003735">
    <property type="term" value="F:structural constituent of ribosome"/>
    <property type="evidence" value="ECO:0007669"/>
    <property type="project" value="InterPro"/>
</dbReference>
<dbReference type="GO" id="GO:0006412">
    <property type="term" value="P:translation"/>
    <property type="evidence" value="ECO:0007669"/>
    <property type="project" value="UniProtKB-UniRule"/>
</dbReference>
<dbReference type="CDD" id="cd03368">
    <property type="entry name" value="Ribosomal_S12"/>
    <property type="match status" value="1"/>
</dbReference>
<dbReference type="FunFam" id="2.40.50.140:FF:000001">
    <property type="entry name" value="30S ribosomal protein S12"/>
    <property type="match status" value="1"/>
</dbReference>
<dbReference type="Gene3D" id="2.40.50.140">
    <property type="entry name" value="Nucleic acid-binding proteins"/>
    <property type="match status" value="1"/>
</dbReference>
<dbReference type="HAMAP" id="MF_00403_B">
    <property type="entry name" value="Ribosomal_uS12_B"/>
    <property type="match status" value="1"/>
</dbReference>
<dbReference type="InterPro" id="IPR012340">
    <property type="entry name" value="NA-bd_OB-fold"/>
</dbReference>
<dbReference type="InterPro" id="IPR006032">
    <property type="entry name" value="Ribosomal_uS12"/>
</dbReference>
<dbReference type="InterPro" id="IPR005679">
    <property type="entry name" value="Ribosomal_uS12_bac"/>
</dbReference>
<dbReference type="NCBIfam" id="TIGR00981">
    <property type="entry name" value="rpsL_bact"/>
    <property type="match status" value="1"/>
</dbReference>
<dbReference type="PANTHER" id="PTHR11652">
    <property type="entry name" value="30S RIBOSOMAL PROTEIN S12 FAMILY MEMBER"/>
    <property type="match status" value="1"/>
</dbReference>
<dbReference type="Pfam" id="PF00164">
    <property type="entry name" value="Ribosom_S12_S23"/>
    <property type="match status" value="1"/>
</dbReference>
<dbReference type="PIRSF" id="PIRSF002133">
    <property type="entry name" value="Ribosomal_S12/S23"/>
    <property type="match status" value="1"/>
</dbReference>
<dbReference type="PRINTS" id="PR01034">
    <property type="entry name" value="RIBOSOMALS12"/>
</dbReference>
<dbReference type="SUPFAM" id="SSF50249">
    <property type="entry name" value="Nucleic acid-binding proteins"/>
    <property type="match status" value="1"/>
</dbReference>
<dbReference type="PROSITE" id="PS00055">
    <property type="entry name" value="RIBOSOMAL_S12"/>
    <property type="match status" value="1"/>
</dbReference>
<comment type="function">
    <text evidence="1">With S4 and S5 plays an important role in translational accuracy. Located at the interface of the 30S and 50S subunits (By similarity).</text>
</comment>
<comment type="subunit">
    <text evidence="1">Part of the 30S ribosomal subunit.</text>
</comment>
<comment type="subcellular location">
    <subcellularLocation>
        <location>Plastid</location>
        <location>Chloroplast</location>
    </subcellularLocation>
</comment>
<comment type="similarity">
    <text evidence="3">Belongs to the universal ribosomal protein uS12 family.</text>
</comment>
<evidence type="ECO:0000250" key="1"/>
<evidence type="ECO:0000256" key="2">
    <source>
        <dbReference type="SAM" id="MobiDB-lite"/>
    </source>
</evidence>
<evidence type="ECO:0000305" key="3"/>
<name>RR12_EMIHU</name>
<gene>
    <name type="primary">rps12</name>
</gene>
<feature type="chain" id="PRO_0000276636" description="Small ribosomal subunit protein uS12c">
    <location>
        <begin position="1"/>
        <end position="125"/>
    </location>
</feature>
<feature type="region of interest" description="Disordered" evidence="2">
    <location>
        <begin position="104"/>
        <end position="125"/>
    </location>
</feature>
<feature type="compositionally biased region" description="Basic residues" evidence="2">
    <location>
        <begin position="113"/>
        <end position="125"/>
    </location>
</feature>
<protein>
    <recommendedName>
        <fullName evidence="3">Small ribosomal subunit protein uS12c</fullName>
    </recommendedName>
    <alternativeName>
        <fullName>30S ribosomal protein S12, chloroplastic</fullName>
    </alternativeName>
</protein>
<proteinExistence type="inferred from homology"/>
<organism>
    <name type="scientific">Emiliania huxleyi</name>
    <name type="common">Coccolithophore</name>
    <name type="synonym">Pontosphaera huxleyi</name>
    <dbReference type="NCBI Taxonomy" id="2903"/>
    <lineage>
        <taxon>Eukaryota</taxon>
        <taxon>Haptista</taxon>
        <taxon>Haptophyta</taxon>
        <taxon>Prymnesiophyceae</taxon>
        <taxon>Isochrysidales</taxon>
        <taxon>Noelaerhabdaceae</taxon>
        <taxon>Emiliania</taxon>
    </lineage>
</organism>